<accession>Q9PKF5</accession>
<dbReference type="EC" id="2.3.1.180" evidence="1"/>
<dbReference type="EMBL" id="AE002160">
    <property type="protein sequence ID" value="AAF39352.1"/>
    <property type="molecule type" value="Genomic_DNA"/>
</dbReference>
<dbReference type="PIR" id="G81695">
    <property type="entry name" value="G81695"/>
</dbReference>
<dbReference type="RefSeq" id="WP_010230644.1">
    <property type="nucleotide sequence ID" value="NZ_CP063055.1"/>
</dbReference>
<dbReference type="SMR" id="Q9PKF5"/>
<dbReference type="GeneID" id="1245870"/>
<dbReference type="KEGG" id="cmu:TC_0510"/>
<dbReference type="PATRIC" id="fig|243161.6.peg.548"/>
<dbReference type="eggNOG" id="COG0332">
    <property type="taxonomic scope" value="Bacteria"/>
</dbReference>
<dbReference type="HOGENOM" id="CLU_039592_3_1_0"/>
<dbReference type="OrthoDB" id="9815506at2"/>
<dbReference type="UniPathway" id="UPA00094"/>
<dbReference type="Proteomes" id="UP000000800">
    <property type="component" value="Chromosome"/>
</dbReference>
<dbReference type="GO" id="GO:0005737">
    <property type="term" value="C:cytoplasm"/>
    <property type="evidence" value="ECO:0007669"/>
    <property type="project" value="UniProtKB-SubCell"/>
</dbReference>
<dbReference type="GO" id="GO:0004315">
    <property type="term" value="F:3-oxoacyl-[acyl-carrier-protein] synthase activity"/>
    <property type="evidence" value="ECO:0007669"/>
    <property type="project" value="InterPro"/>
</dbReference>
<dbReference type="GO" id="GO:0033818">
    <property type="term" value="F:beta-ketoacyl-acyl-carrier-protein synthase III activity"/>
    <property type="evidence" value="ECO:0007669"/>
    <property type="project" value="UniProtKB-UniRule"/>
</dbReference>
<dbReference type="GO" id="GO:0006633">
    <property type="term" value="P:fatty acid biosynthetic process"/>
    <property type="evidence" value="ECO:0007669"/>
    <property type="project" value="UniProtKB-UniRule"/>
</dbReference>
<dbReference type="GO" id="GO:0044550">
    <property type="term" value="P:secondary metabolite biosynthetic process"/>
    <property type="evidence" value="ECO:0007669"/>
    <property type="project" value="TreeGrafter"/>
</dbReference>
<dbReference type="CDD" id="cd00830">
    <property type="entry name" value="KAS_III"/>
    <property type="match status" value="1"/>
</dbReference>
<dbReference type="FunFam" id="3.40.47.10:FF:000004">
    <property type="entry name" value="3-oxoacyl-[acyl-carrier-protein] synthase 3"/>
    <property type="match status" value="1"/>
</dbReference>
<dbReference type="Gene3D" id="3.40.47.10">
    <property type="match status" value="1"/>
</dbReference>
<dbReference type="HAMAP" id="MF_01815">
    <property type="entry name" value="FabH"/>
    <property type="match status" value="1"/>
</dbReference>
<dbReference type="InterPro" id="IPR013747">
    <property type="entry name" value="ACP_syn_III_C"/>
</dbReference>
<dbReference type="InterPro" id="IPR013751">
    <property type="entry name" value="ACP_syn_III_N"/>
</dbReference>
<dbReference type="InterPro" id="IPR004655">
    <property type="entry name" value="FabH"/>
</dbReference>
<dbReference type="InterPro" id="IPR016039">
    <property type="entry name" value="Thiolase-like"/>
</dbReference>
<dbReference type="NCBIfam" id="TIGR00747">
    <property type="entry name" value="fabH"/>
    <property type="match status" value="1"/>
</dbReference>
<dbReference type="NCBIfam" id="NF006829">
    <property type="entry name" value="PRK09352.1"/>
    <property type="match status" value="1"/>
</dbReference>
<dbReference type="PANTHER" id="PTHR34069">
    <property type="entry name" value="3-OXOACYL-[ACYL-CARRIER-PROTEIN] SYNTHASE 3"/>
    <property type="match status" value="1"/>
</dbReference>
<dbReference type="PANTHER" id="PTHR34069:SF2">
    <property type="entry name" value="BETA-KETOACYL-[ACYL-CARRIER-PROTEIN] SYNTHASE III"/>
    <property type="match status" value="1"/>
</dbReference>
<dbReference type="Pfam" id="PF08545">
    <property type="entry name" value="ACP_syn_III"/>
    <property type="match status" value="1"/>
</dbReference>
<dbReference type="Pfam" id="PF08541">
    <property type="entry name" value="ACP_syn_III_C"/>
    <property type="match status" value="1"/>
</dbReference>
<dbReference type="SUPFAM" id="SSF53901">
    <property type="entry name" value="Thiolase-like"/>
    <property type="match status" value="1"/>
</dbReference>
<evidence type="ECO:0000255" key="1">
    <source>
        <dbReference type="HAMAP-Rule" id="MF_01815"/>
    </source>
</evidence>
<organism>
    <name type="scientific">Chlamydia muridarum (strain MoPn / Nigg)</name>
    <dbReference type="NCBI Taxonomy" id="243161"/>
    <lineage>
        <taxon>Bacteria</taxon>
        <taxon>Pseudomonadati</taxon>
        <taxon>Chlamydiota</taxon>
        <taxon>Chlamydiia</taxon>
        <taxon>Chlamydiales</taxon>
        <taxon>Chlamydiaceae</taxon>
        <taxon>Chlamydia/Chlamydophila group</taxon>
        <taxon>Chlamydia</taxon>
    </lineage>
</organism>
<reference key="1">
    <citation type="journal article" date="2000" name="Nucleic Acids Res.">
        <title>Genome sequences of Chlamydia trachomatis MoPn and Chlamydia pneumoniae AR39.</title>
        <authorList>
            <person name="Read T.D."/>
            <person name="Brunham R.C."/>
            <person name="Shen C."/>
            <person name="Gill S.R."/>
            <person name="Heidelberg J.F."/>
            <person name="White O."/>
            <person name="Hickey E.K."/>
            <person name="Peterson J.D."/>
            <person name="Utterback T.R."/>
            <person name="Berry K.J."/>
            <person name="Bass S."/>
            <person name="Linher K.D."/>
            <person name="Weidman J.F."/>
            <person name="Khouri H.M."/>
            <person name="Craven B."/>
            <person name="Bowman C."/>
            <person name="Dodson R.J."/>
            <person name="Gwinn M.L."/>
            <person name="Nelson W.C."/>
            <person name="DeBoy R.T."/>
            <person name="Kolonay J.F."/>
            <person name="McClarty G."/>
            <person name="Salzberg S.L."/>
            <person name="Eisen J.A."/>
            <person name="Fraser C.M."/>
        </authorList>
    </citation>
    <scope>NUCLEOTIDE SEQUENCE [LARGE SCALE GENOMIC DNA]</scope>
    <source>
        <strain>MoPn / Nigg</strain>
    </source>
</reference>
<protein>
    <recommendedName>
        <fullName evidence="1">Beta-ketoacyl-[acyl-carrier-protein] synthase III</fullName>
        <shortName evidence="1">Beta-ketoacyl-ACP synthase III</shortName>
        <shortName evidence="1">KAS III</shortName>
        <ecNumber evidence="1">2.3.1.180</ecNumber>
    </recommendedName>
    <alternativeName>
        <fullName evidence="1">3-oxoacyl-[acyl-carrier-protein] synthase 3</fullName>
    </alternativeName>
    <alternativeName>
        <fullName evidence="1">3-oxoacyl-[acyl-carrier-protein] synthase III</fullName>
    </alternativeName>
</protein>
<name>FABH_CHLMU</name>
<keyword id="KW-0012">Acyltransferase</keyword>
<keyword id="KW-0963">Cytoplasm</keyword>
<keyword id="KW-0275">Fatty acid biosynthesis</keyword>
<keyword id="KW-0276">Fatty acid metabolism</keyword>
<keyword id="KW-0444">Lipid biosynthesis</keyword>
<keyword id="KW-0443">Lipid metabolism</keyword>
<keyword id="KW-0511">Multifunctional enzyme</keyword>
<keyword id="KW-0808">Transferase</keyword>
<comment type="function">
    <text evidence="1">Catalyzes the condensation reaction of fatty acid synthesis by the addition to an acyl acceptor of two carbons from malonyl-ACP. Catalyzes the first condensation reaction which initiates fatty acid synthesis and may therefore play a role in governing the total rate of fatty acid production. Possesses both acetoacetyl-ACP synthase and acetyl transacylase activities. Its substrate specificity determines the biosynthesis of branched-chain and/or straight-chain of fatty acids.</text>
</comment>
<comment type="catalytic activity">
    <reaction evidence="1">
        <text>malonyl-[ACP] + acetyl-CoA + H(+) = 3-oxobutanoyl-[ACP] + CO2 + CoA</text>
        <dbReference type="Rhea" id="RHEA:12080"/>
        <dbReference type="Rhea" id="RHEA-COMP:9623"/>
        <dbReference type="Rhea" id="RHEA-COMP:9625"/>
        <dbReference type="ChEBI" id="CHEBI:15378"/>
        <dbReference type="ChEBI" id="CHEBI:16526"/>
        <dbReference type="ChEBI" id="CHEBI:57287"/>
        <dbReference type="ChEBI" id="CHEBI:57288"/>
        <dbReference type="ChEBI" id="CHEBI:78449"/>
        <dbReference type="ChEBI" id="CHEBI:78450"/>
        <dbReference type="EC" id="2.3.1.180"/>
    </reaction>
</comment>
<comment type="pathway">
    <text evidence="1">Lipid metabolism; fatty acid biosynthesis.</text>
</comment>
<comment type="subunit">
    <text evidence="1">Homodimer.</text>
</comment>
<comment type="subcellular location">
    <subcellularLocation>
        <location evidence="1">Cytoplasm</location>
    </subcellularLocation>
</comment>
<comment type="domain">
    <text evidence="1">The last Arg residue of the ACP-binding site is essential for the weak association between ACP/AcpP and FabH.</text>
</comment>
<comment type="similarity">
    <text evidence="1">Belongs to the thiolase-like superfamily. FabH family.</text>
</comment>
<feature type="chain" id="PRO_0000110413" description="Beta-ketoacyl-[acyl-carrier-protein] synthase III">
    <location>
        <begin position="1"/>
        <end position="327"/>
    </location>
</feature>
<feature type="region of interest" description="ACP-binding" evidence="1">
    <location>
        <begin position="254"/>
        <end position="258"/>
    </location>
</feature>
<feature type="active site" evidence="1">
    <location>
        <position position="112"/>
    </location>
</feature>
<feature type="active site" evidence="1">
    <location>
        <position position="253"/>
    </location>
</feature>
<feature type="active site" evidence="1">
    <location>
        <position position="283"/>
    </location>
</feature>
<gene>
    <name evidence="1" type="primary">fabH</name>
    <name type="ordered locus">TC_0510</name>
</gene>
<sequence>MRASIWGTGSYLPKKVLTNADLEKMVETSDEWISTRTGIKERRIASAEEFSSFMGAKAAEKAIEAAKISKSQIDCIVFATAAPDYIFPSSAALAQAYLGIKEVPAFDCLVACTGFLYGLSIAKAYVEAGMYQCVLVIAADKLSSFVNYEDRNTCVLFGDGGSACVVGPSRPGSLKISKVNLGADGKQGDLLRLPAGGSRCPASQDTIQNQQHFITMEGKEVFKHAVRRMEFAAKTCITEAGLQEEDIDWLVPHQANERIIDAIAKRFAVEDSRVFKTLAKYGNTAASSVGIALDELLRTHDIHSKERLLLVAFGGGLSWGAVILQQM</sequence>
<proteinExistence type="inferred from homology"/>